<feature type="chain" id="PRO_0000377902" description="Polyketide synthase 37">
    <location>
        <begin position="1"/>
        <end position="2968"/>
    </location>
</feature>
<feature type="domain" description="Ketosynthase family 3 (KS3)" evidence="4 12">
    <location>
        <begin position="32"/>
        <end position="454"/>
    </location>
</feature>
<feature type="domain" description="PKS/mFAS DH" evidence="5">
    <location>
        <begin position="1017"/>
        <end position="1350"/>
    </location>
</feature>
<feature type="domain" description="Carrier" evidence="3">
    <location>
        <begin position="2421"/>
        <end position="2498"/>
    </location>
</feature>
<feature type="region of interest" description="Malonyl-CoA:ACP transacylase (MAT) domain" evidence="2 12">
    <location>
        <begin position="624"/>
        <end position="950"/>
    </location>
</feature>
<feature type="region of interest" description="N-terminal hotdog fold" evidence="5">
    <location>
        <begin position="1017"/>
        <end position="1157"/>
    </location>
</feature>
<feature type="region of interest" description="Dehydratase (DH) domain" evidence="2 12">
    <location>
        <begin position="1031"/>
        <end position="1345"/>
    </location>
</feature>
<feature type="region of interest" description="C-terminal hotdog fold" evidence="5">
    <location>
        <begin position="1183"/>
        <end position="1350"/>
    </location>
</feature>
<feature type="region of interest" description="Disordered" evidence="7">
    <location>
        <begin position="1522"/>
        <end position="1547"/>
    </location>
</feature>
<feature type="region of interest" description="Enoyl reductase (ER) domain" evidence="2 12">
    <location>
        <begin position="1718"/>
        <end position="2053"/>
    </location>
</feature>
<feature type="region of interest" description="Ketoreductase (KR) domain" evidence="2 12">
    <location>
        <begin position="2083"/>
        <end position="2277"/>
    </location>
</feature>
<feature type="region of interest" description="Disordered" evidence="7">
    <location>
        <begin position="2379"/>
        <end position="2400"/>
    </location>
</feature>
<feature type="region of interest" description="Disordered" evidence="7">
    <location>
        <begin position="2568"/>
        <end position="2589"/>
    </location>
</feature>
<feature type="region of interest" description="Chalcone synthase" evidence="2 12">
    <location>
        <begin position="2707"/>
        <end position="2968"/>
    </location>
</feature>
<feature type="compositionally biased region" description="Low complexity" evidence="7">
    <location>
        <begin position="1530"/>
        <end position="1547"/>
    </location>
</feature>
<feature type="active site" description="For beta-ketoacyl synthase activity" evidence="4">
    <location>
        <position position="198"/>
    </location>
</feature>
<feature type="active site" description="For beta-ketoacyl synthase activity" evidence="4">
    <location>
        <position position="338"/>
    </location>
</feature>
<feature type="active site" description="For beta-ketoacyl synthase activity" evidence="4">
    <location>
        <position position="378"/>
    </location>
</feature>
<feature type="active site" description="For malonyltransferase activity" evidence="6">
    <location>
        <position position="718"/>
    </location>
</feature>
<feature type="active site" description="Proton acceptor; for dehydratase activity" evidence="5">
    <location>
        <position position="1049"/>
    </location>
</feature>
<feature type="active site" description="Proton donor; for dehydratase activity" evidence="5">
    <location>
        <position position="1257"/>
    </location>
</feature>
<feature type="active site" evidence="6">
    <location>
        <position position="2747"/>
    </location>
</feature>
<feature type="modified residue" description="O-(pantetheine 4'-phosphoryl)serine" evidence="3">
    <location>
        <position position="2458"/>
    </location>
</feature>
<reference key="1">
    <citation type="journal article" date="2005" name="Nature">
        <title>The genome of the social amoeba Dictyostelium discoideum.</title>
        <authorList>
            <person name="Eichinger L."/>
            <person name="Pachebat J.A."/>
            <person name="Gloeckner G."/>
            <person name="Rajandream M.A."/>
            <person name="Sucgang R."/>
            <person name="Berriman M."/>
            <person name="Song J."/>
            <person name="Olsen R."/>
            <person name="Szafranski K."/>
            <person name="Xu Q."/>
            <person name="Tunggal B."/>
            <person name="Kummerfeld S."/>
            <person name="Madera M."/>
            <person name="Konfortov B.A."/>
            <person name="Rivero F."/>
            <person name="Bankier A.T."/>
            <person name="Lehmann R."/>
            <person name="Hamlin N."/>
            <person name="Davies R."/>
            <person name="Gaudet P."/>
            <person name="Fey P."/>
            <person name="Pilcher K."/>
            <person name="Chen G."/>
            <person name="Saunders D."/>
            <person name="Sodergren E.J."/>
            <person name="Davis P."/>
            <person name="Kerhornou A."/>
            <person name="Nie X."/>
            <person name="Hall N."/>
            <person name="Anjard C."/>
            <person name="Hemphill L."/>
            <person name="Bason N."/>
            <person name="Farbrother P."/>
            <person name="Desany B."/>
            <person name="Just E."/>
            <person name="Morio T."/>
            <person name="Rost R."/>
            <person name="Churcher C.M."/>
            <person name="Cooper J."/>
            <person name="Haydock S."/>
            <person name="van Driessche N."/>
            <person name="Cronin A."/>
            <person name="Goodhead I."/>
            <person name="Muzny D.M."/>
            <person name="Mourier T."/>
            <person name="Pain A."/>
            <person name="Lu M."/>
            <person name="Harper D."/>
            <person name="Lindsay R."/>
            <person name="Hauser H."/>
            <person name="James K.D."/>
            <person name="Quiles M."/>
            <person name="Madan Babu M."/>
            <person name="Saito T."/>
            <person name="Buchrieser C."/>
            <person name="Wardroper A."/>
            <person name="Felder M."/>
            <person name="Thangavelu M."/>
            <person name="Johnson D."/>
            <person name="Knights A."/>
            <person name="Loulseged H."/>
            <person name="Mungall K.L."/>
            <person name="Oliver K."/>
            <person name="Price C."/>
            <person name="Quail M.A."/>
            <person name="Urushihara H."/>
            <person name="Hernandez J."/>
            <person name="Rabbinowitsch E."/>
            <person name="Steffen D."/>
            <person name="Sanders M."/>
            <person name="Ma J."/>
            <person name="Kohara Y."/>
            <person name="Sharp S."/>
            <person name="Simmonds M.N."/>
            <person name="Spiegler S."/>
            <person name="Tivey A."/>
            <person name="Sugano S."/>
            <person name="White B."/>
            <person name="Walker D."/>
            <person name="Woodward J.R."/>
            <person name="Winckler T."/>
            <person name="Tanaka Y."/>
            <person name="Shaulsky G."/>
            <person name="Schleicher M."/>
            <person name="Weinstock G.M."/>
            <person name="Rosenthal A."/>
            <person name="Cox E.C."/>
            <person name="Chisholm R.L."/>
            <person name="Gibbs R.A."/>
            <person name="Loomis W.F."/>
            <person name="Platzer M."/>
            <person name="Kay R.R."/>
            <person name="Williams J.G."/>
            <person name="Dear P.H."/>
            <person name="Noegel A.A."/>
            <person name="Barrell B.G."/>
            <person name="Kuspa A."/>
        </authorList>
    </citation>
    <scope>NUCLEOTIDE SEQUENCE [LARGE SCALE GENOMIC DNA]</scope>
    <source>
        <strain>AX4</strain>
    </source>
</reference>
<reference key="2">
    <citation type="journal article" date="1998" name="J. Biol. Chem.">
        <title>The biosynthesis of differentiation-inducing factor, a chlorinated signal molecule regulating Dictyostelium development.</title>
        <authorList>
            <person name="Kay R.R."/>
        </authorList>
    </citation>
    <scope>FUNCTION</scope>
</reference>
<reference key="3">
    <citation type="journal article" date="2006" name="Nat. Chem. Biol.">
        <title>Biosynthesis of Dictyostelium discoideum differentiation-inducing factor by a hybrid type I fatty acid-type III polyketide synthase.</title>
        <authorList>
            <person name="Austin M.B."/>
            <person name="Saito T."/>
            <person name="Bowman M.E."/>
            <person name="Haydock S."/>
            <person name="Kato A."/>
            <person name="Moore B.S."/>
            <person name="Kay R.R."/>
            <person name="Noel J.P."/>
        </authorList>
    </citation>
    <scope>FUNCTION</scope>
    <scope>CATALYTIC ACTIVITY</scope>
    <scope>DOMAIN</scope>
    <scope>DEVELOPMENTAL STAGE</scope>
    <scope>DISRUPTION PHENOTYPE</scope>
</reference>
<reference key="4">
    <citation type="journal article" date="2007" name="Bioinformatics">
        <title>Polyketide synthase genes and the natural products potential of Dictyostelium discoideum.</title>
        <authorList>
            <person name="Zucko J."/>
            <person name="Skunca N."/>
            <person name="Curk T."/>
            <person name="Zupan B."/>
            <person name="Long P.F."/>
            <person name="Cullum J."/>
            <person name="Kessin R.H."/>
            <person name="Hranueli D."/>
        </authorList>
    </citation>
    <scope>IDENTIFICATION</scope>
</reference>
<reference key="5">
    <citation type="journal article" date="2010" name="Proc. Natl. Acad. Sci. U.S.A.">
        <title>A flavin-dependent halogenase catalyzes the chlorination step in the biosynthesis of Dictyostelium differentiation-inducing factor 1.</title>
        <authorList>
            <person name="Neumann C.S."/>
            <person name="Walsh C.T."/>
            <person name="Kay R.R."/>
        </authorList>
    </citation>
    <scope>FUNCTION</scope>
</reference>
<protein>
    <recommendedName>
        <fullName evidence="11">Polyketide synthase 37</fullName>
        <shortName evidence="11">dipks37</shortName>
    </recommendedName>
    <domain>
        <recommendedName>
            <fullName evidence="11">Highly reducing polyketide synthase StlB</fullName>
            <ecNumber evidence="8">2.3.1.-</ecNumber>
        </recommendedName>
    </domain>
    <domain>
        <recommendedName>
            <fullName evidence="11">Chalcone synthase</fullName>
            <ecNumber evidence="8">2.3.1.74</ecNumber>
        </recommendedName>
        <alternativeName>
            <fullName evidence="11">Steely2</fullName>
        </alternativeName>
    </domain>
</protein>
<proteinExistence type="evidence at protein level"/>
<sequence length="2968" mass="329909">MNNNKSINDLSGNSNNNIANSNINNYNNLIKKEPIAIIGIGCRFPGNVSNYSDFVNIIKNGSDCLTKIPDDRWNADIISRKQWKLNNRIGGYLKNIDQFDNQFFGISPKEAQHIDPQQRLLLHLAIETLEDGKISLDEIKGKKVGVFIGSSSGDYLRGFDSSEINQFTTPGTNSSFLSNRLSYFLDVNGPSMTVNTACSASMVAIHLGLQSLWNGESELSMVGGVNIISSPLQSLDFGKAGLLNQETDGRCYSFDPRASGYVRSEGGGILLLKPLSAALRDNDEIYSLLLNSANNSNGKTPTGITSPRSLCQEKLIQQLLRESSDQFSIDDIGYFECHGTGTQMGDLNEITAIGKSIGMLKSHDDPLIIGSVKASIGHLEGASGICGVIKSIICLKEKILPQQCKFSSYNPKIPFETLNLKVLTKTQPWNNSKRICGVNSFGVGGSNSSLFLSSFDKSTTITEPTTTTTIESLPSSSSSFDNLSVSSSISTNNDNDKVSNIVNNRYGSSIDVITLSVTSPDKEDLKIRANDVLESIKTLDDNFKIRDISNLTNIRTSHFSNRVAIIGDSIDSIKLNLQSFIKGENNNNKSIILPLINNGNNNNNNNNNSSGSSSSSSNNNNICFIFSGQGQQWNKMIFDLYENNKTFKNEMNNFSKQFEMISGWSIIDKLYNSGGGGNEELINETWLAQPSIVAVQYSLIKLFSKDIGIEGSIVLGHSLGELMAAYYCGIINDFNDLLKLLYIRSTLQNKTNGSGRMHVCLSSKAEIEQLISQLGFNGRIVICGNNTMKSCTISGDNESMNQFTKLISSQQYGSVVHKEVRTNSAFHSHQMDIIKDEFFKLFNQYFPTNQISTNQIYDGKSFYSTCYGKYLTPIECKQLLSSPNYWWKNIRESVLFKESIEQILQNHQQSLTFIEITCHPILNYFLSQLLKSSSKSNTLLLSTLSKNSNSIDQLLILCSKLYVNNLSSIKWNWFYDKQQQQQSESLVSSNFKLPGRRWKLEKYWIENCQRQMDRIKPPMFISLDRKLFSVTPSFEVRLNQDRFQYLNDHQIQDIPLVPFSFYIELVYASIFNSISTTTTNTTASTMFEIENFTIDSSIIIDQKKSTLIGINFNSDLTKFEIGSINSIGSGSSSNNNFIENKWKIHSNGIIKYGTNYLKSNSKSNSFNESTTTTTTTTTTTKCFKSFNSNEFYNEIIKYNYNYKSTFQCVKEFKQFDKQGTFYYSEIQFKKNDKQVIDQLLSKQLPSDFRCIHPCLLDAVLQSAIIPATNKTNCSWIPIKIGKLSVNIPSNSYFNFKDQLLYCLIKPSTSTSTSPSTYFSSDIQVFDKKNNNLICELTNLEFKGINSSSSSSSSSSTINSNVEANYESKIEETNHDEDEDEELPLVSEYVWCKEELINQSIKFTDNYQTVIFCSTNLNGNDLLDSIITSALENGHDENKIFIVSPPPVESDQYNNRIIINYTNNESDFDALFAIINSTTSISGKSGLFSTRFIILPNFNSITFSSGNSTPLITNVNGNGNGKSCGGGGGSTNNTISNSSSSISSIDNGNNEDEEMVLKSFNDSNLSLFHLQKSIIKNNIKGRLFLITNGGQSISSSTPTSTYNDQSYVNLSQYQLIGQIRVFSNEYPIMECSMIDIQDSTRIDLITDQLNSTKLSKLEIAFRDNIGYSYKLLKPSIFDNSSLPSSSSEIETTATTKDEEKNNSINYNNNYYRVELSDNGIISDLKIKQFRQMKCGVGQVLVRVEMCTLNFRDILKSLGRDYDPIHLNSMGDEFSGKVIEIGEGVNNLSVGQYVFGINMSKSMGSFVCCNSDLVFPIPIPTPSSSSSSNENIDDQEIISKLLNQYCTIPIVFLTSWYSIVIQGRLKKGEKILIHSGCGGVGLATIQISMMIGAEIHVTVGSNEKKQYLIKEFGIDEKRIYSSRSLQFYNDLMVNTDGQGVDMVLNSLSGEYLEKSIQCLSQYGRFIEIGKKDIYSNSSIHLEPFKNNLSFFAVDIAQMTENRRDYLREIMIDQLLPCFKNGSLKPLNQHCFNSPCDLVKAIRFMSSGNHIGKILINWSNLNNDKQFINHHSVVHLPIQSFSNRSTYIFTGFGGLTQTLLKYFSTESDLTNVIIVSKNGLDDNSGSGSGNNEKLKLINQLKESGLNVLVEKCDLSSIKQVYKLFNKIFDNDASGSDSGDFSDIKGIFHFASLINDKRILKHNLESFNYVYNSKATSAWNLHQVSLKYNLNLDHFQTIGSVITILGNIGQSNYTCANRFVEGLTHLRIGMGLKSSCIHLASIPDVGMASNDNVLNDLNSMGFVPFQSLNEMNLGFKKLLSSPNPIVVLGEINVDRFIEATPNFRAKDNFIITSLFNRIDPLLLVNESQDFIINNNINNNGGGGDGSFDDLNQLEDEGQQGFGNGDGYVDDNIDSVSMLSGTSSIFDNDFYTKSIRGMLCDILELKDKDLNNTVSFSDYGLDSLLSSELSNTIQKNFSILIPSLTLVDNSTINSTVELIKNKLKNSTTSSISSSVSKKVSFKKNTQPLIIPTTAPISIIKTQSYIKSEIIESLPISSSTTIKPLVFDNLVYSSSSSNNSNSKNELTSPPPSAKRESVLPIISEDNNSDNDSSMATVIYEISPIAAPYHRYQTDVLKEITQLTPHKEFIDNIYKKSKIRSRYCFNDFSEKSMADINKLDAGERVALFREQTYQTVINAGKTVIERAGIDPMLISHVVGVTSTGIMAPSFDVVLIDKLGLSINTSRTMINFMGCGAAVNSMRAATAYAKLKPGTFVLVVAVEASATCMKFNFDSRSDLLSQAIFTDGCVATLVTCQPKSSLVGKLEIIDDLSYLMPDSRDALNLFIGPTGIDLDLRPELPIAINRHINSAITSWLKKNSLQKSDIEFFATHPGGAKIISAVHEGLGLSPEDLSDSYEVMKRYGNMIGVSTYYVLRRILDKNQTLLQEGSLGYNYGMAMAFSPGASIEAILFKLIK</sequence>
<organism>
    <name type="scientific">Dictyostelium discoideum</name>
    <name type="common">Social amoeba</name>
    <dbReference type="NCBI Taxonomy" id="44689"/>
    <lineage>
        <taxon>Eukaryota</taxon>
        <taxon>Amoebozoa</taxon>
        <taxon>Evosea</taxon>
        <taxon>Eumycetozoa</taxon>
        <taxon>Dictyostelia</taxon>
        <taxon>Dictyosteliales</taxon>
        <taxon>Dictyosteliaceae</taxon>
        <taxon>Dictyostelium</taxon>
    </lineage>
</organism>
<evidence type="ECO:0000250" key="1">
    <source>
        <dbReference type="UniProtKB" id="A0A0K0MCJ4"/>
    </source>
</evidence>
<evidence type="ECO:0000255" key="2"/>
<evidence type="ECO:0000255" key="3">
    <source>
        <dbReference type="PROSITE-ProRule" id="PRU00258"/>
    </source>
</evidence>
<evidence type="ECO:0000255" key="4">
    <source>
        <dbReference type="PROSITE-ProRule" id="PRU01348"/>
    </source>
</evidence>
<evidence type="ECO:0000255" key="5">
    <source>
        <dbReference type="PROSITE-ProRule" id="PRU01363"/>
    </source>
</evidence>
<evidence type="ECO:0000255" key="6">
    <source>
        <dbReference type="PROSITE-ProRule" id="PRU10022"/>
    </source>
</evidence>
<evidence type="ECO:0000256" key="7">
    <source>
        <dbReference type="SAM" id="MobiDB-lite"/>
    </source>
</evidence>
<evidence type="ECO:0000269" key="8">
    <source>
    </source>
</evidence>
<evidence type="ECO:0000269" key="9">
    <source>
    </source>
</evidence>
<evidence type="ECO:0000269" key="10">
    <source>
    </source>
</evidence>
<evidence type="ECO:0000303" key="11">
    <source>
    </source>
</evidence>
<evidence type="ECO:0000305" key="12">
    <source>
    </source>
</evidence>
<name>STLB_DICDI</name>
<dbReference type="EC" id="2.3.1.-" evidence="8"/>
<dbReference type="EC" id="2.3.1.74" evidence="8"/>
<dbReference type="EMBL" id="AAFI02000171">
    <property type="protein sequence ID" value="EAL62021.1"/>
    <property type="molecule type" value="Genomic_DNA"/>
</dbReference>
<dbReference type="RefSeq" id="XP_635518.1">
    <property type="nucleotide sequence ID" value="XM_630426.1"/>
</dbReference>
<dbReference type="SMR" id="Q54FI3"/>
<dbReference type="STRING" id="44689.Q54FI3"/>
<dbReference type="GlyGen" id="Q54FI3">
    <property type="glycosylation" value="1 site"/>
</dbReference>
<dbReference type="PaxDb" id="44689-DDB0234163"/>
<dbReference type="EnsemblProtists" id="EAL62021">
    <property type="protein sequence ID" value="EAL62021"/>
    <property type="gene ID" value="DDB_G0290853"/>
</dbReference>
<dbReference type="GeneID" id="8627855"/>
<dbReference type="KEGG" id="ddi:DDB_G0290853"/>
<dbReference type="dictyBase" id="DDB_G0290853">
    <property type="gene designation" value="stlB"/>
</dbReference>
<dbReference type="VEuPathDB" id="AmoebaDB:DDB_G0290853"/>
<dbReference type="eggNOG" id="KOG1202">
    <property type="taxonomic scope" value="Eukaryota"/>
</dbReference>
<dbReference type="HOGENOM" id="CLU_000022_31_5_1"/>
<dbReference type="InParanoid" id="Q54FI3"/>
<dbReference type="OMA" id="KMRGGEF"/>
<dbReference type="PhylomeDB" id="Q54FI3"/>
<dbReference type="UniPathway" id="UPA00154"/>
<dbReference type="PRO" id="PR:Q54FI3"/>
<dbReference type="Proteomes" id="UP000002195">
    <property type="component" value="Chromosome 5"/>
</dbReference>
<dbReference type="GO" id="GO:0004315">
    <property type="term" value="F:3-oxoacyl-[acyl-carrier-protein] synthase activity"/>
    <property type="evidence" value="ECO:0007669"/>
    <property type="project" value="InterPro"/>
</dbReference>
<dbReference type="GO" id="GO:0016210">
    <property type="term" value="F:naringenin-chalcone synthase activity"/>
    <property type="evidence" value="ECO:0007669"/>
    <property type="project" value="UniProtKB-EC"/>
</dbReference>
<dbReference type="GO" id="GO:0016491">
    <property type="term" value="F:oxidoreductase activity"/>
    <property type="evidence" value="ECO:0007669"/>
    <property type="project" value="InterPro"/>
</dbReference>
<dbReference type="GO" id="GO:0031177">
    <property type="term" value="F:phosphopantetheine binding"/>
    <property type="evidence" value="ECO:0007669"/>
    <property type="project" value="InterPro"/>
</dbReference>
<dbReference type="GO" id="GO:0106265">
    <property type="term" value="F:THPH synthase activity"/>
    <property type="evidence" value="ECO:0007669"/>
    <property type="project" value="RHEA"/>
</dbReference>
<dbReference type="GO" id="GO:0048102">
    <property type="term" value="P:autophagic cell death"/>
    <property type="evidence" value="ECO:0000315"/>
    <property type="project" value="dictyBase"/>
</dbReference>
<dbReference type="GO" id="GO:0018893">
    <property type="term" value="P:dibenzofuran metabolic process"/>
    <property type="evidence" value="ECO:0000315"/>
    <property type="project" value="dictyBase"/>
</dbReference>
<dbReference type="GO" id="GO:0031148">
    <property type="term" value="P:DIF-1 biosynthetic process"/>
    <property type="evidence" value="ECO:0000315"/>
    <property type="project" value="dictyBase"/>
</dbReference>
<dbReference type="GO" id="GO:0006633">
    <property type="term" value="P:fatty acid biosynthetic process"/>
    <property type="evidence" value="ECO:0000318"/>
    <property type="project" value="GO_Central"/>
</dbReference>
<dbReference type="GO" id="GO:0009813">
    <property type="term" value="P:flavonoid biosynthetic process"/>
    <property type="evidence" value="ECO:0007669"/>
    <property type="project" value="UniProtKB-UniPathway"/>
</dbReference>
<dbReference type="GO" id="GO:0010629">
    <property type="term" value="P:negative regulation of gene expression"/>
    <property type="evidence" value="ECO:0000316"/>
    <property type="project" value="dictyBase"/>
</dbReference>
<dbReference type="GO" id="GO:0030639">
    <property type="term" value="P:polyketide biosynthetic process"/>
    <property type="evidence" value="ECO:0000314"/>
    <property type="project" value="dictyBase"/>
</dbReference>
<dbReference type="GO" id="GO:0010628">
    <property type="term" value="P:positive regulation of gene expression"/>
    <property type="evidence" value="ECO:0000316"/>
    <property type="project" value="dictyBase"/>
</dbReference>
<dbReference type="GO" id="GO:0031288">
    <property type="term" value="P:sorocarp morphogenesis"/>
    <property type="evidence" value="ECO:0000315"/>
    <property type="project" value="dictyBase"/>
</dbReference>
<dbReference type="GO" id="GO:0031149">
    <property type="term" value="P:sorocarp stalk cell differentiation"/>
    <property type="evidence" value="ECO:0000315"/>
    <property type="project" value="dictyBase"/>
</dbReference>
<dbReference type="CDD" id="cd05195">
    <property type="entry name" value="enoyl_red"/>
    <property type="match status" value="1"/>
</dbReference>
<dbReference type="CDD" id="cd08954">
    <property type="entry name" value="KR_1_FAS_SDR_x"/>
    <property type="match status" value="1"/>
</dbReference>
<dbReference type="CDD" id="cd00833">
    <property type="entry name" value="PKS"/>
    <property type="match status" value="1"/>
</dbReference>
<dbReference type="FunFam" id="3.40.50.720:FF:000209">
    <property type="entry name" value="Polyketide synthase Pks12"/>
    <property type="match status" value="1"/>
</dbReference>
<dbReference type="Gene3D" id="3.30.70.3290">
    <property type="match status" value="1"/>
</dbReference>
<dbReference type="Gene3D" id="3.40.47.10">
    <property type="match status" value="3"/>
</dbReference>
<dbReference type="Gene3D" id="1.10.1200.10">
    <property type="entry name" value="ACP-like"/>
    <property type="match status" value="1"/>
</dbReference>
<dbReference type="Gene3D" id="3.40.366.10">
    <property type="entry name" value="Malonyl-Coenzyme A Acyl Carrier Protein, domain 2"/>
    <property type="match status" value="1"/>
</dbReference>
<dbReference type="Gene3D" id="3.90.180.10">
    <property type="entry name" value="Medium-chain alcohol dehydrogenases, catalytic domain"/>
    <property type="match status" value="1"/>
</dbReference>
<dbReference type="Gene3D" id="3.40.50.720">
    <property type="entry name" value="NAD(P)-binding Rossmann-like Domain"/>
    <property type="match status" value="2"/>
</dbReference>
<dbReference type="Gene3D" id="3.10.129.110">
    <property type="entry name" value="Polyketide synthase dehydratase"/>
    <property type="match status" value="1"/>
</dbReference>
<dbReference type="InterPro" id="IPR001227">
    <property type="entry name" value="Ac_transferase_dom_sf"/>
</dbReference>
<dbReference type="InterPro" id="IPR036736">
    <property type="entry name" value="ACP-like_sf"/>
</dbReference>
<dbReference type="InterPro" id="IPR014043">
    <property type="entry name" value="Acyl_transferase_dom"/>
</dbReference>
<dbReference type="InterPro" id="IPR016035">
    <property type="entry name" value="Acyl_Trfase/lysoPLipase"/>
</dbReference>
<dbReference type="InterPro" id="IPR013154">
    <property type="entry name" value="ADH-like_N"/>
</dbReference>
<dbReference type="InterPro" id="IPR012328">
    <property type="entry name" value="Chalcone/stilbene_synt_C"/>
</dbReference>
<dbReference type="InterPro" id="IPR001099">
    <property type="entry name" value="Chalcone/stilbene_synt_N"/>
</dbReference>
<dbReference type="InterPro" id="IPR011032">
    <property type="entry name" value="GroES-like_sf"/>
</dbReference>
<dbReference type="InterPro" id="IPR018201">
    <property type="entry name" value="Ketoacyl_synth_AS"/>
</dbReference>
<dbReference type="InterPro" id="IPR014031">
    <property type="entry name" value="Ketoacyl_synth_C"/>
</dbReference>
<dbReference type="InterPro" id="IPR014030">
    <property type="entry name" value="Ketoacyl_synth_N"/>
</dbReference>
<dbReference type="InterPro" id="IPR036291">
    <property type="entry name" value="NAD(P)-bd_dom_sf"/>
</dbReference>
<dbReference type="InterPro" id="IPR032821">
    <property type="entry name" value="PKS_assoc"/>
</dbReference>
<dbReference type="InterPro" id="IPR020841">
    <property type="entry name" value="PKS_Beta-ketoAc_synthase_dom"/>
</dbReference>
<dbReference type="InterPro" id="IPR042104">
    <property type="entry name" value="PKS_dehydratase_sf"/>
</dbReference>
<dbReference type="InterPro" id="IPR049551">
    <property type="entry name" value="PKS_DH_C"/>
</dbReference>
<dbReference type="InterPro" id="IPR049552">
    <property type="entry name" value="PKS_DH_N"/>
</dbReference>
<dbReference type="InterPro" id="IPR020843">
    <property type="entry name" value="PKS_ER"/>
</dbReference>
<dbReference type="InterPro" id="IPR013968">
    <property type="entry name" value="PKS_KR"/>
</dbReference>
<dbReference type="InterPro" id="IPR049900">
    <property type="entry name" value="PKS_mFAS_DH"/>
</dbReference>
<dbReference type="InterPro" id="IPR020806">
    <property type="entry name" value="PKS_PP-bd"/>
</dbReference>
<dbReference type="InterPro" id="IPR050444">
    <property type="entry name" value="Polyketide_Synthase"/>
</dbReference>
<dbReference type="InterPro" id="IPR009081">
    <property type="entry name" value="PP-bd_ACP"/>
</dbReference>
<dbReference type="InterPro" id="IPR016039">
    <property type="entry name" value="Thiolase-like"/>
</dbReference>
<dbReference type="PANTHER" id="PTHR45681:SF6">
    <property type="entry name" value="POLYKETIDE SYNTHASE 37"/>
    <property type="match status" value="1"/>
</dbReference>
<dbReference type="PANTHER" id="PTHR45681">
    <property type="entry name" value="POLYKETIDE SYNTHASE 44-RELATED"/>
    <property type="match status" value="1"/>
</dbReference>
<dbReference type="Pfam" id="PF00698">
    <property type="entry name" value="Acyl_transf_1"/>
    <property type="match status" value="1"/>
</dbReference>
<dbReference type="Pfam" id="PF08240">
    <property type="entry name" value="ADH_N"/>
    <property type="match status" value="1"/>
</dbReference>
<dbReference type="Pfam" id="PF13602">
    <property type="entry name" value="ADH_zinc_N_2"/>
    <property type="match status" value="1"/>
</dbReference>
<dbReference type="Pfam" id="PF02797">
    <property type="entry name" value="Chal_sti_synt_C"/>
    <property type="match status" value="1"/>
</dbReference>
<dbReference type="Pfam" id="PF00195">
    <property type="entry name" value="Chal_sti_synt_N"/>
    <property type="match status" value="1"/>
</dbReference>
<dbReference type="Pfam" id="PF16197">
    <property type="entry name" value="KAsynt_C_assoc"/>
    <property type="match status" value="1"/>
</dbReference>
<dbReference type="Pfam" id="PF00109">
    <property type="entry name" value="ketoacyl-synt"/>
    <property type="match status" value="1"/>
</dbReference>
<dbReference type="Pfam" id="PF02801">
    <property type="entry name" value="Ketoacyl-synt_C"/>
    <property type="match status" value="1"/>
</dbReference>
<dbReference type="Pfam" id="PF08659">
    <property type="entry name" value="KR"/>
    <property type="match status" value="1"/>
</dbReference>
<dbReference type="Pfam" id="PF21089">
    <property type="entry name" value="PKS_DH_N"/>
    <property type="match status" value="1"/>
</dbReference>
<dbReference type="Pfam" id="PF00550">
    <property type="entry name" value="PP-binding"/>
    <property type="match status" value="1"/>
</dbReference>
<dbReference type="Pfam" id="PF14765">
    <property type="entry name" value="PS-DH"/>
    <property type="match status" value="1"/>
</dbReference>
<dbReference type="SMART" id="SM00827">
    <property type="entry name" value="PKS_AT"/>
    <property type="match status" value="1"/>
</dbReference>
<dbReference type="SMART" id="SM00829">
    <property type="entry name" value="PKS_ER"/>
    <property type="match status" value="1"/>
</dbReference>
<dbReference type="SMART" id="SM00822">
    <property type="entry name" value="PKS_KR"/>
    <property type="match status" value="1"/>
</dbReference>
<dbReference type="SMART" id="SM00825">
    <property type="entry name" value="PKS_KS"/>
    <property type="match status" value="1"/>
</dbReference>
<dbReference type="SMART" id="SM00823">
    <property type="entry name" value="PKS_PP"/>
    <property type="match status" value="1"/>
</dbReference>
<dbReference type="SUPFAM" id="SSF47336">
    <property type="entry name" value="ACP-like"/>
    <property type="match status" value="1"/>
</dbReference>
<dbReference type="SUPFAM" id="SSF52151">
    <property type="entry name" value="FabD/lysophospholipase-like"/>
    <property type="match status" value="1"/>
</dbReference>
<dbReference type="SUPFAM" id="SSF50129">
    <property type="entry name" value="GroES-like"/>
    <property type="match status" value="1"/>
</dbReference>
<dbReference type="SUPFAM" id="SSF51735">
    <property type="entry name" value="NAD(P)-binding Rossmann-fold domains"/>
    <property type="match status" value="2"/>
</dbReference>
<dbReference type="SUPFAM" id="SSF53901">
    <property type="entry name" value="Thiolase-like"/>
    <property type="match status" value="3"/>
</dbReference>
<dbReference type="PROSITE" id="PS50075">
    <property type="entry name" value="CARRIER"/>
    <property type="match status" value="1"/>
</dbReference>
<dbReference type="PROSITE" id="PS00606">
    <property type="entry name" value="KS3_1"/>
    <property type="match status" value="1"/>
</dbReference>
<dbReference type="PROSITE" id="PS52004">
    <property type="entry name" value="KS3_2"/>
    <property type="match status" value="1"/>
</dbReference>
<dbReference type="PROSITE" id="PS52019">
    <property type="entry name" value="PKS_MFAS_DH"/>
    <property type="match status" value="1"/>
</dbReference>
<keyword id="KW-0012">Acyltransferase</keyword>
<keyword id="KW-0511">Multifunctional enzyme</keyword>
<keyword id="KW-0596">Phosphopantetheine</keyword>
<keyword id="KW-0597">Phosphoprotein</keyword>
<keyword id="KW-1185">Reference proteome</keyword>
<keyword id="KW-0808">Transferase</keyword>
<gene>
    <name type="primary">StlB</name>
    <name type="synonym">pks37</name>
    <name type="ORF">DDB_G0290853</name>
</gene>
<comment type="function">
    <text evidence="8 9 10">Polyketide synthase; part of the gene cluster that mediates the biosynthesis of DIF-1 (Differentiation Inducing Factor-1), a signal molecule involved in the differentiation of pstO (prestalk-O) cells (PubMed:16906151). The three-step process begins with the formation of (2,4,6-trihydroxyphenyl)-1-hexan-1-one (THPH) by the polyketide synthase StlB (PubMed:16906151). THPH is then dichlorinated by the flavin-dependent halogenase ChlA (PubMed:20231486). The last step of DIF-1 biosynthesis is the O-methylation of dichloro-THPH (or des-methyl-DIF-1) by the methyltransferase DmtA to yield DIF-1 (PubMed:9446571).</text>
</comment>
<comment type="catalytic activity">
    <reaction evidence="8">
        <text>(E)-4-coumaroyl-CoA + 3 malonyl-CoA + 3 H(+) = 2',4,4',6'-tetrahydroxychalcone + 3 CO2 + 4 CoA</text>
        <dbReference type="Rhea" id="RHEA:11128"/>
        <dbReference type="ChEBI" id="CHEBI:15378"/>
        <dbReference type="ChEBI" id="CHEBI:15413"/>
        <dbReference type="ChEBI" id="CHEBI:16526"/>
        <dbReference type="ChEBI" id="CHEBI:57287"/>
        <dbReference type="ChEBI" id="CHEBI:57384"/>
        <dbReference type="ChEBI" id="CHEBI:85008"/>
        <dbReference type="EC" id="2.3.1.74"/>
    </reaction>
    <physiologicalReaction direction="left-to-right" evidence="8">
        <dbReference type="Rhea" id="RHEA:11129"/>
    </physiologicalReaction>
</comment>
<comment type="catalytic activity">
    <reaction evidence="8">
        <text>hexanoyl-CoA + 3 malonyl-CoA + 3 H(+) = 2,4,6-trihydroxyphenylhexan-1-one + 3 CO2 + 4 CoA</text>
        <dbReference type="Rhea" id="RHEA:64352"/>
        <dbReference type="ChEBI" id="CHEBI:15378"/>
        <dbReference type="ChEBI" id="CHEBI:16526"/>
        <dbReference type="ChEBI" id="CHEBI:57287"/>
        <dbReference type="ChEBI" id="CHEBI:57384"/>
        <dbReference type="ChEBI" id="CHEBI:62620"/>
        <dbReference type="ChEBI" id="CHEBI:150865"/>
    </reaction>
    <physiologicalReaction direction="left-to-right" evidence="8">
        <dbReference type="Rhea" id="RHEA:64353"/>
    </physiologicalReaction>
</comment>
<comment type="cofactor">
    <cofactor evidence="1">
        <name>pantetheine 4'-phosphate</name>
        <dbReference type="ChEBI" id="CHEBI:47942"/>
    </cofactor>
    <text evidence="1">Binds 1 phosphopantetheine covalently.</text>
</comment>
<comment type="pathway">
    <text>Secondary metabolite biosynthesis; flavonoid biosynthesis.</text>
</comment>
<comment type="developmental stage">
    <text evidence="8">Expressed during development. Coordinately expressed with dmtA.</text>
</comment>
<comment type="domain">
    <text>Modular protein possessing six classical catalytic domains and a type III polyketide synthase domain. May facilitate covalent transfer of steely N-terminal acyl products directly to the C-terminal type III PKS active sites, which catalyze both iterative polyketide extension and cyclization.</text>
</comment>
<comment type="disruption phenotype">
    <text evidence="8">Developed to the slug stage, in which dif-1 accumulation is maximal, though the Steely2- mutant slugs were thin and tended to break up. However, two independent Steely2 mutant strains both failed to accumulate any detectable dif-1 at this or any other stage of development.</text>
</comment>
<comment type="miscellaneous">
    <text>Encoded by one of the numerous copies of polyketide synthase genes localized in chromosome 5.</text>
</comment>
<comment type="miscellaneous">
    <text evidence="12">In reference to their hybrid nature and to their discovery in D.discoideum, authors term these type I FAS-type III PKS fusion enzymes 'steely'.</text>
</comment>
<accession>Q54FI3</accession>